<comment type="function">
    <text evidence="1">The RecF protein is involved in DNA metabolism; it is required for DNA replication and normal SOS inducibility. RecF binds preferentially to single-stranded, linear DNA. It also seems to bind ATP.</text>
</comment>
<comment type="subcellular location">
    <subcellularLocation>
        <location evidence="1">Cytoplasm</location>
    </subcellularLocation>
</comment>
<comment type="similarity">
    <text evidence="1">Belongs to the RecF family.</text>
</comment>
<name>RECF_SALHS</name>
<accession>B4TAU7</accession>
<proteinExistence type="inferred from homology"/>
<feature type="chain" id="PRO_1000121150" description="DNA replication and repair protein RecF">
    <location>
        <begin position="1"/>
        <end position="357"/>
    </location>
</feature>
<feature type="binding site" evidence="1">
    <location>
        <begin position="30"/>
        <end position="37"/>
    </location>
    <ligand>
        <name>ATP</name>
        <dbReference type="ChEBI" id="CHEBI:30616"/>
    </ligand>
</feature>
<gene>
    <name evidence="1" type="primary">recF</name>
    <name type="ordered locus">SeHA_C4170</name>
</gene>
<reference key="1">
    <citation type="journal article" date="2011" name="J. Bacteriol.">
        <title>Comparative genomics of 28 Salmonella enterica isolates: evidence for CRISPR-mediated adaptive sublineage evolution.</title>
        <authorList>
            <person name="Fricke W.F."/>
            <person name="Mammel M.K."/>
            <person name="McDermott P.F."/>
            <person name="Tartera C."/>
            <person name="White D.G."/>
            <person name="Leclerc J.E."/>
            <person name="Ravel J."/>
            <person name="Cebula T.A."/>
        </authorList>
    </citation>
    <scope>NUCLEOTIDE SEQUENCE [LARGE SCALE GENOMIC DNA]</scope>
    <source>
        <strain>SL476</strain>
    </source>
</reference>
<sequence length="357" mass="40514">MSLTRLLIKDFRNIENADLALSPGFNFLVGANGSGKTSVLEAIYTLGHGRAFRSLQPGRVIRHEQEAFVLHGRLQSEERETSIGLTKDKQGDSKVRIDGTDGHKIAELAHLMPMQLITPEGFTLLNGGPKYRRAFLDWGCFHNEAGFFTAWSNLKRLLKQRNAALRQVSRYEQLRPWDKELIPLAEQISTWRAEYSSAIAQDMADTCQQFLPEFSLTFSFQRGWEKETDYADVLERSFERDRMLTYTAHGPHKADFRIRADGAPVEDTLSRGQLKLLMCALRLAQGEFLTRESGRRCLYLIDDFASELDDARRGLLASRLKATQSQVFVSAISAEHVIDMSDENSKMFTVEKGKITD</sequence>
<evidence type="ECO:0000255" key="1">
    <source>
        <dbReference type="HAMAP-Rule" id="MF_00365"/>
    </source>
</evidence>
<keyword id="KW-0067">ATP-binding</keyword>
<keyword id="KW-0963">Cytoplasm</keyword>
<keyword id="KW-0227">DNA damage</keyword>
<keyword id="KW-0234">DNA repair</keyword>
<keyword id="KW-0235">DNA replication</keyword>
<keyword id="KW-0238">DNA-binding</keyword>
<keyword id="KW-0547">Nucleotide-binding</keyword>
<keyword id="KW-0742">SOS response</keyword>
<protein>
    <recommendedName>
        <fullName evidence="1">DNA replication and repair protein RecF</fullName>
    </recommendedName>
</protein>
<organism>
    <name type="scientific">Salmonella heidelberg (strain SL476)</name>
    <dbReference type="NCBI Taxonomy" id="454169"/>
    <lineage>
        <taxon>Bacteria</taxon>
        <taxon>Pseudomonadati</taxon>
        <taxon>Pseudomonadota</taxon>
        <taxon>Gammaproteobacteria</taxon>
        <taxon>Enterobacterales</taxon>
        <taxon>Enterobacteriaceae</taxon>
        <taxon>Salmonella</taxon>
    </lineage>
</organism>
<dbReference type="EMBL" id="CP001120">
    <property type="protein sequence ID" value="ACF68765.1"/>
    <property type="molecule type" value="Genomic_DNA"/>
</dbReference>
<dbReference type="RefSeq" id="WP_000060085.1">
    <property type="nucleotide sequence ID" value="NC_011083.1"/>
</dbReference>
<dbReference type="SMR" id="B4TAU7"/>
<dbReference type="KEGG" id="seh:SeHA_C4170"/>
<dbReference type="HOGENOM" id="CLU_040267_0_0_6"/>
<dbReference type="Proteomes" id="UP000001866">
    <property type="component" value="Chromosome"/>
</dbReference>
<dbReference type="GO" id="GO:0005737">
    <property type="term" value="C:cytoplasm"/>
    <property type="evidence" value="ECO:0007669"/>
    <property type="project" value="UniProtKB-SubCell"/>
</dbReference>
<dbReference type="GO" id="GO:0005524">
    <property type="term" value="F:ATP binding"/>
    <property type="evidence" value="ECO:0007669"/>
    <property type="project" value="UniProtKB-UniRule"/>
</dbReference>
<dbReference type="GO" id="GO:0003697">
    <property type="term" value="F:single-stranded DNA binding"/>
    <property type="evidence" value="ECO:0007669"/>
    <property type="project" value="UniProtKB-UniRule"/>
</dbReference>
<dbReference type="GO" id="GO:0006260">
    <property type="term" value="P:DNA replication"/>
    <property type="evidence" value="ECO:0007669"/>
    <property type="project" value="UniProtKB-UniRule"/>
</dbReference>
<dbReference type="GO" id="GO:0000731">
    <property type="term" value="P:DNA synthesis involved in DNA repair"/>
    <property type="evidence" value="ECO:0007669"/>
    <property type="project" value="TreeGrafter"/>
</dbReference>
<dbReference type="GO" id="GO:0006302">
    <property type="term" value="P:double-strand break repair"/>
    <property type="evidence" value="ECO:0007669"/>
    <property type="project" value="TreeGrafter"/>
</dbReference>
<dbReference type="GO" id="GO:0009432">
    <property type="term" value="P:SOS response"/>
    <property type="evidence" value="ECO:0007669"/>
    <property type="project" value="UniProtKB-UniRule"/>
</dbReference>
<dbReference type="FunFam" id="1.20.1050.90:FF:000001">
    <property type="entry name" value="DNA replication and repair protein RecF"/>
    <property type="match status" value="1"/>
</dbReference>
<dbReference type="Gene3D" id="3.40.50.300">
    <property type="entry name" value="P-loop containing nucleotide triphosphate hydrolases"/>
    <property type="match status" value="1"/>
</dbReference>
<dbReference type="Gene3D" id="1.20.1050.90">
    <property type="entry name" value="RecF/RecN/SMC, N-terminal domain"/>
    <property type="match status" value="1"/>
</dbReference>
<dbReference type="HAMAP" id="MF_00365">
    <property type="entry name" value="RecF"/>
    <property type="match status" value="1"/>
</dbReference>
<dbReference type="InterPro" id="IPR001238">
    <property type="entry name" value="DNA-binding_RecF"/>
</dbReference>
<dbReference type="InterPro" id="IPR018078">
    <property type="entry name" value="DNA-binding_RecF_CS"/>
</dbReference>
<dbReference type="InterPro" id="IPR027417">
    <property type="entry name" value="P-loop_NTPase"/>
</dbReference>
<dbReference type="InterPro" id="IPR003395">
    <property type="entry name" value="RecF/RecN/SMC_N"/>
</dbReference>
<dbReference type="InterPro" id="IPR042174">
    <property type="entry name" value="RecF_2"/>
</dbReference>
<dbReference type="NCBIfam" id="TIGR00611">
    <property type="entry name" value="recf"/>
    <property type="match status" value="1"/>
</dbReference>
<dbReference type="PANTHER" id="PTHR32182">
    <property type="entry name" value="DNA REPLICATION AND REPAIR PROTEIN RECF"/>
    <property type="match status" value="1"/>
</dbReference>
<dbReference type="PANTHER" id="PTHR32182:SF0">
    <property type="entry name" value="DNA REPLICATION AND REPAIR PROTEIN RECF"/>
    <property type="match status" value="1"/>
</dbReference>
<dbReference type="Pfam" id="PF02463">
    <property type="entry name" value="SMC_N"/>
    <property type="match status" value="1"/>
</dbReference>
<dbReference type="SUPFAM" id="SSF52540">
    <property type="entry name" value="P-loop containing nucleoside triphosphate hydrolases"/>
    <property type="match status" value="1"/>
</dbReference>
<dbReference type="PROSITE" id="PS00617">
    <property type="entry name" value="RECF_1"/>
    <property type="match status" value="1"/>
</dbReference>
<dbReference type="PROSITE" id="PS00618">
    <property type="entry name" value="RECF_2"/>
    <property type="match status" value="1"/>
</dbReference>